<organism>
    <name type="scientific">Bombyx mori</name>
    <name type="common">Silk moth</name>
    <dbReference type="NCBI Taxonomy" id="7091"/>
    <lineage>
        <taxon>Eukaryota</taxon>
        <taxon>Metazoa</taxon>
        <taxon>Ecdysozoa</taxon>
        <taxon>Arthropoda</taxon>
        <taxon>Hexapoda</taxon>
        <taxon>Insecta</taxon>
        <taxon>Pterygota</taxon>
        <taxon>Neoptera</taxon>
        <taxon>Endopterygota</taxon>
        <taxon>Lepidoptera</taxon>
        <taxon>Glossata</taxon>
        <taxon>Ditrysia</taxon>
        <taxon>Bombycoidea</taxon>
        <taxon>Bombycidae</taxon>
        <taxon>Bombycinae</taxon>
        <taxon>Bombyx</taxon>
    </lineage>
</organism>
<gene>
    <name type="primary">BBXB12</name>
</gene>
<comment type="function">
    <text>Brain peptide responsible for activation of prothoracic glands to produce ecdysone in insects.</text>
</comment>
<comment type="subunit">
    <text>Heterodimer of a B chain and an A chain linked by two disulfide bonds.</text>
</comment>
<comment type="subcellular location">
    <subcellularLocation>
        <location>Secreted</location>
    </subcellularLocation>
</comment>
<comment type="miscellaneous">
    <text>Silk worm has two kinds of PTTH: 4K-PTTH and 22K-PTTH; there are many forms of 4K-PTTH.</text>
</comment>
<comment type="similarity">
    <text evidence="3">Belongs to the insulin family.</text>
</comment>
<feature type="signal peptide" evidence="2">
    <location>
        <begin position="1"/>
        <end position="20"/>
    </location>
</feature>
<feature type="peptide" id="PRO_0000016022" description="Bombyxin B-12 B chain">
    <location>
        <begin position="21"/>
        <end position="46"/>
    </location>
</feature>
<feature type="propeptide" id="PRO_0000016023" description="C peptide like">
    <location>
        <begin position="49"/>
        <end position="67"/>
    </location>
</feature>
<feature type="peptide" id="PRO_0000016024" description="Bombyxin B-12 A chain">
    <location>
        <begin position="70"/>
        <end position="90"/>
    </location>
</feature>
<feature type="disulfide bond" description="Interchain (between B and A chains)" evidence="1">
    <location>
        <begin position="30"/>
        <end position="76"/>
    </location>
</feature>
<feature type="disulfide bond" description="Interchain (between B and A chains)" evidence="1">
    <location>
        <begin position="42"/>
        <end position="89"/>
    </location>
</feature>
<feature type="disulfide bond" evidence="1">
    <location>
        <begin position="75"/>
        <end position="80"/>
    </location>
</feature>
<evidence type="ECO:0000250" key="1"/>
<evidence type="ECO:0000255" key="2"/>
<evidence type="ECO:0000305" key="3"/>
<keyword id="KW-0165">Cleavage on pair of basic residues</keyword>
<keyword id="KW-1015">Disulfide bond</keyword>
<keyword id="KW-0372">Hormone</keyword>
<keyword id="KW-1185">Reference proteome</keyword>
<keyword id="KW-0964">Secreted</keyword>
<keyword id="KW-0732">Signal</keyword>
<sequence>MMKTTIMFMLVVVISLTYSSEEQEVARTYCGAHLANTLADLCFGVEKRSGAQYAPYFWTRQYLGSRGKRGVVDECCFQPCTLDVLLSYCG</sequence>
<dbReference type="EMBL" id="D00789">
    <property type="protein sequence ID" value="BAA00685.1"/>
    <property type="molecule type" value="Genomic_DNA"/>
</dbReference>
<dbReference type="PIR" id="S69492">
    <property type="entry name" value="S69492"/>
</dbReference>
<dbReference type="RefSeq" id="NP_001121794.1">
    <property type="nucleotide sequence ID" value="NM_001128322.1"/>
</dbReference>
<dbReference type="SMR" id="P29519"/>
<dbReference type="FunCoup" id="P29519">
    <property type="interactions" value="162"/>
</dbReference>
<dbReference type="GeneID" id="100169722"/>
<dbReference type="KEGG" id="bmor:100169722"/>
<dbReference type="CTD" id="100169722"/>
<dbReference type="HOGENOM" id="CLU_125164_2_0_1"/>
<dbReference type="InParanoid" id="P29519"/>
<dbReference type="Proteomes" id="UP000005204">
    <property type="component" value="Unassembled WGS sequence"/>
</dbReference>
<dbReference type="GO" id="GO:0005615">
    <property type="term" value="C:extracellular space"/>
    <property type="evidence" value="ECO:0007669"/>
    <property type="project" value="InterPro"/>
</dbReference>
<dbReference type="GO" id="GO:0008083">
    <property type="term" value="F:growth factor activity"/>
    <property type="evidence" value="ECO:0007669"/>
    <property type="project" value="InterPro"/>
</dbReference>
<dbReference type="GO" id="GO:0005179">
    <property type="term" value="F:hormone activity"/>
    <property type="evidence" value="ECO:0007669"/>
    <property type="project" value="UniProtKB-KW"/>
</dbReference>
<dbReference type="CDD" id="cd04366">
    <property type="entry name" value="IlGF_insulin_bombyxin_like"/>
    <property type="match status" value="1"/>
</dbReference>
<dbReference type="Gene3D" id="1.10.100.10">
    <property type="entry name" value="Insulin-like"/>
    <property type="match status" value="1"/>
</dbReference>
<dbReference type="InterPro" id="IPR017097">
    <property type="entry name" value="Bombyxin"/>
</dbReference>
<dbReference type="InterPro" id="IPR027285">
    <property type="entry name" value="Bombyxin_B"/>
</dbReference>
<dbReference type="InterPro" id="IPR016179">
    <property type="entry name" value="Insulin-like"/>
</dbReference>
<dbReference type="InterPro" id="IPR036438">
    <property type="entry name" value="Insulin-like_sf"/>
</dbReference>
<dbReference type="InterPro" id="IPR022353">
    <property type="entry name" value="Insulin_CS"/>
</dbReference>
<dbReference type="InterPro" id="IPR022352">
    <property type="entry name" value="Insulin_family"/>
</dbReference>
<dbReference type="PANTHER" id="PTHR13647:SF4">
    <property type="entry name" value="INSULIN-LIKE PEPTIDE 1-RELATED"/>
    <property type="match status" value="1"/>
</dbReference>
<dbReference type="PANTHER" id="PTHR13647">
    <property type="entry name" value="INSULIN-LIKE PEPTIDE 2-RELATED"/>
    <property type="match status" value="1"/>
</dbReference>
<dbReference type="Pfam" id="PF00049">
    <property type="entry name" value="Insulin"/>
    <property type="match status" value="1"/>
</dbReference>
<dbReference type="PIRSF" id="PIRSF037038">
    <property type="entry name" value="Bombyxin"/>
    <property type="match status" value="1"/>
</dbReference>
<dbReference type="PIRSF" id="PIRSF500313">
    <property type="entry name" value="Bombyxin_B"/>
    <property type="match status" value="1"/>
</dbReference>
<dbReference type="PRINTS" id="PR02003">
    <property type="entry name" value="BOMBYXIN"/>
</dbReference>
<dbReference type="PRINTS" id="PR00276">
    <property type="entry name" value="INSULINFAMLY"/>
</dbReference>
<dbReference type="SMART" id="SM00078">
    <property type="entry name" value="IlGF"/>
    <property type="match status" value="1"/>
</dbReference>
<dbReference type="SUPFAM" id="SSF56994">
    <property type="entry name" value="Insulin-like"/>
    <property type="match status" value="1"/>
</dbReference>
<dbReference type="PROSITE" id="PS00262">
    <property type="entry name" value="INSULIN"/>
    <property type="match status" value="1"/>
</dbReference>
<reference key="1">
    <citation type="journal article" date="1996" name="J. Mol. Biol.">
        <title>Multiple gene copies for bombyxin, an insulin-related peptide of the silkmoth Bombyx mori: structural signs for gene rearrangement and duplication responsible for generation of multiple molecular forms of bombyxin.</title>
        <authorList>
            <person name="Kondo H."/>
            <person name="Ino M."/>
            <person name="Suzuki A."/>
            <person name="Ishizaki H."/>
            <person name="Iwami M."/>
        </authorList>
    </citation>
    <scope>NUCLEOTIDE SEQUENCE [GENOMIC DNA]</scope>
</reference>
<proteinExistence type="inferred from homology"/>
<name>BXB12_BOMMO</name>
<accession>P29519</accession>
<protein>
    <recommendedName>
        <fullName>Bombyxin B-12</fullName>
        <shortName>BBX-B12</shortName>
    </recommendedName>
    <alternativeName>
        <fullName>4K-prothoracicotropic hormone</fullName>
        <shortName>4K-PTTH</shortName>
    </alternativeName>
    <component>
        <recommendedName>
            <fullName>Bombyxin B-12 B chain</fullName>
        </recommendedName>
    </component>
    <component>
        <recommendedName>
            <fullName>Bombyxin B-12 A chain</fullName>
        </recommendedName>
    </component>
</protein>